<organism>
    <name type="scientific">Lactococcus lactis subsp. cremoris (strain SK11)</name>
    <dbReference type="NCBI Taxonomy" id="272622"/>
    <lineage>
        <taxon>Bacteria</taxon>
        <taxon>Bacillati</taxon>
        <taxon>Bacillota</taxon>
        <taxon>Bacilli</taxon>
        <taxon>Lactobacillales</taxon>
        <taxon>Streptococcaceae</taxon>
        <taxon>Lactococcus</taxon>
        <taxon>Lactococcus cremoris subsp. cremoris</taxon>
    </lineage>
</organism>
<proteinExistence type="inferred from homology"/>
<name>RRF_LACLS</name>
<protein>
    <recommendedName>
        <fullName evidence="1">Ribosome-recycling factor</fullName>
        <shortName evidence="1">RRF</shortName>
    </recommendedName>
    <alternativeName>
        <fullName evidence="1">Ribosome-releasing factor</fullName>
    </alternativeName>
</protein>
<comment type="function">
    <text evidence="1">Responsible for the release of ribosomes from messenger RNA at the termination of protein biosynthesis. May increase the efficiency of translation by recycling ribosomes from one round of translation to another.</text>
</comment>
<comment type="subcellular location">
    <subcellularLocation>
        <location evidence="1">Cytoplasm</location>
    </subcellularLocation>
</comment>
<comment type="similarity">
    <text evidence="1">Belongs to the RRF family.</text>
</comment>
<reference key="1">
    <citation type="journal article" date="2006" name="Proc. Natl. Acad. Sci. U.S.A.">
        <title>Comparative genomics of the lactic acid bacteria.</title>
        <authorList>
            <person name="Makarova K.S."/>
            <person name="Slesarev A."/>
            <person name="Wolf Y.I."/>
            <person name="Sorokin A."/>
            <person name="Mirkin B."/>
            <person name="Koonin E.V."/>
            <person name="Pavlov A."/>
            <person name="Pavlova N."/>
            <person name="Karamychev V."/>
            <person name="Polouchine N."/>
            <person name="Shakhova V."/>
            <person name="Grigoriev I."/>
            <person name="Lou Y."/>
            <person name="Rohksar D."/>
            <person name="Lucas S."/>
            <person name="Huang K."/>
            <person name="Goodstein D.M."/>
            <person name="Hawkins T."/>
            <person name="Plengvidhya V."/>
            <person name="Welker D."/>
            <person name="Hughes J."/>
            <person name="Goh Y."/>
            <person name="Benson A."/>
            <person name="Baldwin K."/>
            <person name="Lee J.-H."/>
            <person name="Diaz-Muniz I."/>
            <person name="Dosti B."/>
            <person name="Smeianov V."/>
            <person name="Wechter W."/>
            <person name="Barabote R."/>
            <person name="Lorca G."/>
            <person name="Altermann E."/>
            <person name="Barrangou R."/>
            <person name="Ganesan B."/>
            <person name="Xie Y."/>
            <person name="Rawsthorne H."/>
            <person name="Tamir D."/>
            <person name="Parker C."/>
            <person name="Breidt F."/>
            <person name="Broadbent J.R."/>
            <person name="Hutkins R."/>
            <person name="O'Sullivan D."/>
            <person name="Steele J."/>
            <person name="Unlu G."/>
            <person name="Saier M.H. Jr."/>
            <person name="Klaenhammer T."/>
            <person name="Richardson P."/>
            <person name="Kozyavkin S."/>
            <person name="Weimer B.C."/>
            <person name="Mills D.A."/>
        </authorList>
    </citation>
    <scope>NUCLEOTIDE SEQUENCE [LARGE SCALE GENOMIC DNA]</scope>
    <source>
        <strain>SK11</strain>
    </source>
</reference>
<gene>
    <name evidence="1" type="primary">frr</name>
    <name type="ordered locus">LACR_2291</name>
</gene>
<feature type="chain" id="PRO_1000003186" description="Ribosome-recycling factor">
    <location>
        <begin position="1"/>
        <end position="185"/>
    </location>
</feature>
<accession>Q02WC5</accession>
<sequence length="185" mass="20802">MANEIVTTAQERMKHSLASLQRDLGHLRAGRANASLLDRVQVVYYGAPTPLNQLASITIPEARVLMVTPFDKSILKDIEKSLYESDLGITPANDGSVIRLVIPMLTEERRRELVKEMGKYIESAKVAIRNIRRDAMDTAKKSEKAKEITEDDLKDLENEIQKVTDDAVKEADRLASVKEKELLDI</sequence>
<keyword id="KW-0963">Cytoplasm</keyword>
<keyword id="KW-0648">Protein biosynthesis</keyword>
<dbReference type="EMBL" id="CP000425">
    <property type="protein sequence ID" value="ABJ73747.1"/>
    <property type="molecule type" value="Genomic_DNA"/>
</dbReference>
<dbReference type="RefSeq" id="WP_011677081.1">
    <property type="nucleotide sequence ID" value="NC_008527.1"/>
</dbReference>
<dbReference type="SMR" id="Q02WC5"/>
<dbReference type="GeneID" id="61110334"/>
<dbReference type="KEGG" id="llc:LACR_2291"/>
<dbReference type="HOGENOM" id="CLU_073981_2_0_9"/>
<dbReference type="Proteomes" id="UP000000240">
    <property type="component" value="Chromosome"/>
</dbReference>
<dbReference type="GO" id="GO:0005737">
    <property type="term" value="C:cytoplasm"/>
    <property type="evidence" value="ECO:0007669"/>
    <property type="project" value="UniProtKB-SubCell"/>
</dbReference>
<dbReference type="GO" id="GO:0043023">
    <property type="term" value="F:ribosomal large subunit binding"/>
    <property type="evidence" value="ECO:0007669"/>
    <property type="project" value="TreeGrafter"/>
</dbReference>
<dbReference type="GO" id="GO:0006415">
    <property type="term" value="P:translational termination"/>
    <property type="evidence" value="ECO:0007669"/>
    <property type="project" value="UniProtKB-UniRule"/>
</dbReference>
<dbReference type="CDD" id="cd00520">
    <property type="entry name" value="RRF"/>
    <property type="match status" value="1"/>
</dbReference>
<dbReference type="FunFam" id="1.10.132.20:FF:000001">
    <property type="entry name" value="Ribosome-recycling factor"/>
    <property type="match status" value="1"/>
</dbReference>
<dbReference type="FunFam" id="3.30.1360.40:FF:000001">
    <property type="entry name" value="Ribosome-recycling factor"/>
    <property type="match status" value="1"/>
</dbReference>
<dbReference type="Gene3D" id="3.30.1360.40">
    <property type="match status" value="1"/>
</dbReference>
<dbReference type="Gene3D" id="1.10.132.20">
    <property type="entry name" value="Ribosome-recycling factor"/>
    <property type="match status" value="1"/>
</dbReference>
<dbReference type="HAMAP" id="MF_00040">
    <property type="entry name" value="RRF"/>
    <property type="match status" value="1"/>
</dbReference>
<dbReference type="InterPro" id="IPR002661">
    <property type="entry name" value="Ribosome_recyc_fac"/>
</dbReference>
<dbReference type="InterPro" id="IPR023584">
    <property type="entry name" value="Ribosome_recyc_fac_dom"/>
</dbReference>
<dbReference type="InterPro" id="IPR036191">
    <property type="entry name" value="RRF_sf"/>
</dbReference>
<dbReference type="NCBIfam" id="TIGR00496">
    <property type="entry name" value="frr"/>
    <property type="match status" value="1"/>
</dbReference>
<dbReference type="PANTHER" id="PTHR20982:SF3">
    <property type="entry name" value="MITOCHONDRIAL RIBOSOME RECYCLING FACTOR PSEUDO 1"/>
    <property type="match status" value="1"/>
</dbReference>
<dbReference type="PANTHER" id="PTHR20982">
    <property type="entry name" value="RIBOSOME RECYCLING FACTOR"/>
    <property type="match status" value="1"/>
</dbReference>
<dbReference type="Pfam" id="PF01765">
    <property type="entry name" value="RRF"/>
    <property type="match status" value="1"/>
</dbReference>
<dbReference type="SUPFAM" id="SSF55194">
    <property type="entry name" value="Ribosome recycling factor, RRF"/>
    <property type="match status" value="1"/>
</dbReference>
<evidence type="ECO:0000255" key="1">
    <source>
        <dbReference type="HAMAP-Rule" id="MF_00040"/>
    </source>
</evidence>